<comment type="function">
    <text evidence="2">Component of the ubiquinol-cytochrome c reductase complex (complex III or cytochrome b-c1 complex) that is part of the mitochondrial respiratory chain. The b-c1 complex mediates electron transfer from ubiquinol to cytochrome c. Contributes to the generation of a proton gradient across the mitochondrial membrane that is then used for ATP synthesis.</text>
</comment>
<comment type="cofactor">
    <cofactor evidence="2">
        <name>heme b</name>
        <dbReference type="ChEBI" id="CHEBI:60344"/>
    </cofactor>
    <text evidence="2">Binds 2 heme b groups non-covalently.</text>
</comment>
<comment type="subunit">
    <text evidence="2">The cytochrome bc1 complex contains 11 subunits: 3 respiratory subunits (MT-CYB, CYC1 and UQCRFS1), 2 core proteins (UQCRC1 and UQCRC2) and 6 low-molecular weight proteins (UQCRH/QCR6, UQCRB/QCR7, UQCRQ/QCR8, UQCR10/QCR9, UQCR11/QCR10 and a cleavage product of UQCRFS1). This cytochrome bc1 complex then forms a dimer.</text>
</comment>
<comment type="subcellular location">
    <subcellularLocation>
        <location evidence="2">Mitochondrion inner membrane</location>
        <topology evidence="2">Multi-pass membrane protein</topology>
    </subcellularLocation>
</comment>
<comment type="miscellaneous">
    <text evidence="1">Heme 1 (or BL or b562) is low-potential and absorbs at about 562 nm, and heme 2 (or BH or b566) is high-potential and absorbs at about 566 nm.</text>
</comment>
<comment type="similarity">
    <text evidence="3 4">Belongs to the cytochrome b family.</text>
</comment>
<comment type="caution">
    <text evidence="2">The full-length protein contains only eight transmembrane helices, not nine as predicted by bioinformatics tools.</text>
</comment>
<name>CYB_CHANE</name>
<feature type="chain" id="PRO_0000255000" description="Cytochrome b">
    <location>
        <begin position="1"/>
        <end position="379"/>
    </location>
</feature>
<feature type="transmembrane region" description="Helical" evidence="2">
    <location>
        <begin position="33"/>
        <end position="53"/>
    </location>
</feature>
<feature type="transmembrane region" description="Helical" evidence="2">
    <location>
        <begin position="77"/>
        <end position="98"/>
    </location>
</feature>
<feature type="transmembrane region" description="Helical" evidence="2">
    <location>
        <begin position="113"/>
        <end position="133"/>
    </location>
</feature>
<feature type="transmembrane region" description="Helical" evidence="2">
    <location>
        <begin position="178"/>
        <end position="198"/>
    </location>
</feature>
<feature type="transmembrane region" description="Helical" evidence="2">
    <location>
        <begin position="226"/>
        <end position="246"/>
    </location>
</feature>
<feature type="transmembrane region" description="Helical" evidence="2">
    <location>
        <begin position="288"/>
        <end position="308"/>
    </location>
</feature>
<feature type="transmembrane region" description="Helical" evidence="2">
    <location>
        <begin position="320"/>
        <end position="340"/>
    </location>
</feature>
<feature type="transmembrane region" description="Helical" evidence="2">
    <location>
        <begin position="347"/>
        <end position="367"/>
    </location>
</feature>
<feature type="binding site" description="axial binding residue" evidence="2">
    <location>
        <position position="83"/>
    </location>
    <ligand>
        <name>heme b</name>
        <dbReference type="ChEBI" id="CHEBI:60344"/>
        <label>b562</label>
    </ligand>
    <ligandPart>
        <name>Fe</name>
        <dbReference type="ChEBI" id="CHEBI:18248"/>
    </ligandPart>
</feature>
<feature type="binding site" description="axial binding residue" evidence="2">
    <location>
        <position position="97"/>
    </location>
    <ligand>
        <name>heme b</name>
        <dbReference type="ChEBI" id="CHEBI:60344"/>
        <label>b566</label>
    </ligand>
    <ligandPart>
        <name>Fe</name>
        <dbReference type="ChEBI" id="CHEBI:18248"/>
    </ligandPart>
</feature>
<feature type="binding site" description="axial binding residue" evidence="2">
    <location>
        <position position="182"/>
    </location>
    <ligand>
        <name>heme b</name>
        <dbReference type="ChEBI" id="CHEBI:60344"/>
        <label>b562</label>
    </ligand>
    <ligandPart>
        <name>Fe</name>
        <dbReference type="ChEBI" id="CHEBI:18248"/>
    </ligandPart>
</feature>
<feature type="binding site" description="axial binding residue" evidence="2">
    <location>
        <position position="196"/>
    </location>
    <ligand>
        <name>heme b</name>
        <dbReference type="ChEBI" id="CHEBI:60344"/>
        <label>b566</label>
    </ligand>
    <ligandPart>
        <name>Fe</name>
        <dbReference type="ChEBI" id="CHEBI:18248"/>
    </ligandPart>
</feature>
<feature type="binding site" evidence="2">
    <location>
        <position position="201"/>
    </location>
    <ligand>
        <name>a ubiquinone</name>
        <dbReference type="ChEBI" id="CHEBI:16389"/>
    </ligand>
</feature>
<geneLocation type="mitochondrion"/>
<protein>
    <recommendedName>
        <fullName>Cytochrome b</fullName>
    </recommendedName>
    <alternativeName>
        <fullName>Complex III subunit 3</fullName>
    </alternativeName>
    <alternativeName>
        <fullName>Complex III subunit III</fullName>
    </alternativeName>
    <alternativeName>
        <fullName>Cytochrome b-c1 complex subunit 3</fullName>
    </alternativeName>
    <alternativeName>
        <fullName>Ubiquinol-cytochrome-c reductase complex cytochrome b subunit</fullName>
    </alternativeName>
</protein>
<evidence type="ECO:0000250" key="1"/>
<evidence type="ECO:0000250" key="2">
    <source>
        <dbReference type="UniProtKB" id="P00157"/>
    </source>
</evidence>
<evidence type="ECO:0000255" key="3">
    <source>
        <dbReference type="PROSITE-ProRule" id="PRU00967"/>
    </source>
</evidence>
<evidence type="ECO:0000255" key="4">
    <source>
        <dbReference type="PROSITE-ProRule" id="PRU00968"/>
    </source>
</evidence>
<dbReference type="EMBL" id="AY926390">
    <property type="protein sequence ID" value="AAY23233.1"/>
    <property type="molecule type" value="Genomic_DNA"/>
</dbReference>
<dbReference type="SMR" id="Q508L3"/>
<dbReference type="GO" id="GO:0005743">
    <property type="term" value="C:mitochondrial inner membrane"/>
    <property type="evidence" value="ECO:0007669"/>
    <property type="project" value="UniProtKB-SubCell"/>
</dbReference>
<dbReference type="GO" id="GO:0045275">
    <property type="term" value="C:respiratory chain complex III"/>
    <property type="evidence" value="ECO:0007669"/>
    <property type="project" value="InterPro"/>
</dbReference>
<dbReference type="GO" id="GO:0046872">
    <property type="term" value="F:metal ion binding"/>
    <property type="evidence" value="ECO:0007669"/>
    <property type="project" value="UniProtKB-KW"/>
</dbReference>
<dbReference type="GO" id="GO:0008121">
    <property type="term" value="F:ubiquinol-cytochrome-c reductase activity"/>
    <property type="evidence" value="ECO:0007669"/>
    <property type="project" value="InterPro"/>
</dbReference>
<dbReference type="GO" id="GO:0006122">
    <property type="term" value="P:mitochondrial electron transport, ubiquinol to cytochrome c"/>
    <property type="evidence" value="ECO:0007669"/>
    <property type="project" value="TreeGrafter"/>
</dbReference>
<dbReference type="CDD" id="cd00290">
    <property type="entry name" value="cytochrome_b_C"/>
    <property type="match status" value="1"/>
</dbReference>
<dbReference type="CDD" id="cd00284">
    <property type="entry name" value="Cytochrome_b_N"/>
    <property type="match status" value="1"/>
</dbReference>
<dbReference type="FunFam" id="1.20.810.10:FF:000002">
    <property type="entry name" value="Cytochrome b"/>
    <property type="match status" value="1"/>
</dbReference>
<dbReference type="Gene3D" id="1.20.810.10">
    <property type="entry name" value="Cytochrome Bc1 Complex, Chain C"/>
    <property type="match status" value="1"/>
</dbReference>
<dbReference type="InterPro" id="IPR005798">
    <property type="entry name" value="Cyt_b/b6_C"/>
</dbReference>
<dbReference type="InterPro" id="IPR036150">
    <property type="entry name" value="Cyt_b/b6_C_sf"/>
</dbReference>
<dbReference type="InterPro" id="IPR005797">
    <property type="entry name" value="Cyt_b/b6_N"/>
</dbReference>
<dbReference type="InterPro" id="IPR027387">
    <property type="entry name" value="Cytb/b6-like_sf"/>
</dbReference>
<dbReference type="InterPro" id="IPR030689">
    <property type="entry name" value="Cytochrome_b"/>
</dbReference>
<dbReference type="InterPro" id="IPR048260">
    <property type="entry name" value="Cytochrome_b_C_euk/bac"/>
</dbReference>
<dbReference type="InterPro" id="IPR048259">
    <property type="entry name" value="Cytochrome_b_N_euk/bac"/>
</dbReference>
<dbReference type="InterPro" id="IPR016174">
    <property type="entry name" value="Di-haem_cyt_TM"/>
</dbReference>
<dbReference type="PANTHER" id="PTHR19271">
    <property type="entry name" value="CYTOCHROME B"/>
    <property type="match status" value="1"/>
</dbReference>
<dbReference type="PANTHER" id="PTHR19271:SF16">
    <property type="entry name" value="CYTOCHROME B"/>
    <property type="match status" value="1"/>
</dbReference>
<dbReference type="Pfam" id="PF00032">
    <property type="entry name" value="Cytochrom_B_C"/>
    <property type="match status" value="1"/>
</dbReference>
<dbReference type="Pfam" id="PF00033">
    <property type="entry name" value="Cytochrome_B"/>
    <property type="match status" value="1"/>
</dbReference>
<dbReference type="PIRSF" id="PIRSF038885">
    <property type="entry name" value="COB"/>
    <property type="match status" value="1"/>
</dbReference>
<dbReference type="SUPFAM" id="SSF81648">
    <property type="entry name" value="a domain/subunit of cytochrome bc1 complex (Ubiquinol-cytochrome c reductase)"/>
    <property type="match status" value="1"/>
</dbReference>
<dbReference type="SUPFAM" id="SSF81342">
    <property type="entry name" value="Transmembrane di-heme cytochromes"/>
    <property type="match status" value="1"/>
</dbReference>
<dbReference type="PROSITE" id="PS51003">
    <property type="entry name" value="CYTB_CTER"/>
    <property type="match status" value="1"/>
</dbReference>
<dbReference type="PROSITE" id="PS51002">
    <property type="entry name" value="CYTB_NTER"/>
    <property type="match status" value="1"/>
</dbReference>
<gene>
    <name type="primary">MT-CYB</name>
    <name type="synonym">COB</name>
    <name type="synonym">CYTB</name>
    <name type="synonym">MTCYB</name>
</gene>
<proteinExistence type="inferred from homology"/>
<sequence length="379" mass="42812">MTIMRKSHPLMKMVNHAFIDLPAPSNISSWWNFGSLLGLCLIIQIASGLFLAMHYSSDTTLAFSSVAHICRDVNYGWLIRYIHANGASLFFICLYLHIGRGIYYGSYMYKETWNIGIALLFLTMATAFMGYVLPWGQMSFWGATVITNLLSAIPYVGTSLVEWIWGGFSVDKATLTRFFAFHFILPFIIAATAMVHLLFLHETGSNNPLGIPSNSDKIPFHPYYTFKDLLGMIIILAMFLTFVLFFPDLLGDPDNYSPANPLNTPPHIKPEWYFLFAYAILRSIPNKLGGVIALVLSILVLALFPFLHTANQRSMMFRPISQLLFWTLVSDLMILTWIGGQPVEPPFIIIGQIASILYFSIILIFLPIAGLIENKILKW</sequence>
<reference key="1">
    <citation type="journal article" date="2005" name="J. Mammal.">
        <title>Phylogenetics of the new world rodent family Heteromyidae.</title>
        <authorList>
            <person name="Alexander L.F."/>
            <person name="Riddle B.R."/>
        </authorList>
    </citation>
    <scope>NUCLEOTIDE SEQUENCE [GENOMIC DNA]</scope>
    <source>
        <strain>Isolate LVT 1075</strain>
    </source>
</reference>
<accession>Q508L3</accession>
<keyword id="KW-0249">Electron transport</keyword>
<keyword id="KW-0349">Heme</keyword>
<keyword id="KW-0408">Iron</keyword>
<keyword id="KW-0472">Membrane</keyword>
<keyword id="KW-0479">Metal-binding</keyword>
<keyword id="KW-0496">Mitochondrion</keyword>
<keyword id="KW-0999">Mitochondrion inner membrane</keyword>
<keyword id="KW-0679">Respiratory chain</keyword>
<keyword id="KW-0812">Transmembrane</keyword>
<keyword id="KW-1133">Transmembrane helix</keyword>
<keyword id="KW-0813">Transport</keyword>
<keyword id="KW-0830">Ubiquinone</keyword>
<organism>
    <name type="scientific">Chaetodipus nelsoni</name>
    <name type="common">Nelson's pocket mouse</name>
    <dbReference type="NCBI Taxonomy" id="145412"/>
    <lineage>
        <taxon>Eukaryota</taxon>
        <taxon>Metazoa</taxon>
        <taxon>Chordata</taxon>
        <taxon>Craniata</taxon>
        <taxon>Vertebrata</taxon>
        <taxon>Euteleostomi</taxon>
        <taxon>Mammalia</taxon>
        <taxon>Eutheria</taxon>
        <taxon>Euarchontoglires</taxon>
        <taxon>Glires</taxon>
        <taxon>Rodentia</taxon>
        <taxon>Castorimorpha</taxon>
        <taxon>Heteromyidae</taxon>
        <taxon>Perognathinae</taxon>
        <taxon>Chaetodipus</taxon>
    </lineage>
</organism>